<protein>
    <recommendedName>
        <fullName evidence="1">DNA repair protein RecO</fullName>
    </recommendedName>
    <alternativeName>
        <fullName evidence="1">Recombination protein O</fullName>
    </alternativeName>
</protein>
<feature type="chain" id="PRO_0000325194" description="DNA repair protein RecO">
    <location>
        <begin position="1"/>
        <end position="237"/>
    </location>
</feature>
<accession>A6VKS6</accession>
<organism>
    <name type="scientific">Actinobacillus succinogenes (strain ATCC 55618 / DSM 22257 / CCUG 43843 / 130Z)</name>
    <dbReference type="NCBI Taxonomy" id="339671"/>
    <lineage>
        <taxon>Bacteria</taxon>
        <taxon>Pseudomonadati</taxon>
        <taxon>Pseudomonadota</taxon>
        <taxon>Gammaproteobacteria</taxon>
        <taxon>Pasteurellales</taxon>
        <taxon>Pasteurellaceae</taxon>
        <taxon>Actinobacillus</taxon>
    </lineage>
</organism>
<gene>
    <name evidence="1" type="primary">recO</name>
    <name type="ordered locus">Asuc_0193</name>
</gene>
<reference key="1">
    <citation type="journal article" date="2010" name="BMC Genomics">
        <title>A genomic perspective on the potential of Actinobacillus succinogenes for industrial succinate production.</title>
        <authorList>
            <person name="McKinlay J.B."/>
            <person name="Laivenieks M."/>
            <person name="Schindler B.D."/>
            <person name="McKinlay A.A."/>
            <person name="Siddaramappa S."/>
            <person name="Challacombe J.F."/>
            <person name="Lowry S.R."/>
            <person name="Clum A."/>
            <person name="Lapidus A.L."/>
            <person name="Burkhart K.B."/>
            <person name="Harkins V."/>
            <person name="Vieille C."/>
        </authorList>
    </citation>
    <scope>NUCLEOTIDE SEQUENCE [LARGE SCALE GENOMIC DNA]</scope>
    <source>
        <strain>ATCC 55618 / DSM 22257 / CCUG 43843 / 130Z</strain>
    </source>
</reference>
<keyword id="KW-0227">DNA damage</keyword>
<keyword id="KW-0233">DNA recombination</keyword>
<keyword id="KW-0234">DNA repair</keyword>
<keyword id="KW-1185">Reference proteome</keyword>
<proteinExistence type="inferred from homology"/>
<evidence type="ECO:0000255" key="1">
    <source>
        <dbReference type="HAMAP-Rule" id="MF_00201"/>
    </source>
</evidence>
<sequence length="237" mass="26739">MAIETFQRGFVLHRKPYSETSLLVDLFTEETGRLTVLAKGARAKRSAWKGVLQPFTPLLLRWSGKGALKTLTKAEPAAIALPLQQTALFSGFYVNELLCRVIEAETPNGELFQDYLHCLTRLASEDGVEPALRTFEFQLLTMLGYGVDFTHCAGSGEPVDEAMTYRYREEKGFTASLIKDNATFYGRDLLAFEARDFRDPAVRSAAKRFTRMALKPYLGNKPLKSRELFAHNILFLK</sequence>
<name>RECO_ACTSZ</name>
<dbReference type="EMBL" id="CP000746">
    <property type="protein sequence ID" value="ABR73573.1"/>
    <property type="molecule type" value="Genomic_DNA"/>
</dbReference>
<dbReference type="RefSeq" id="WP_011978849.1">
    <property type="nucleotide sequence ID" value="NC_009655.1"/>
</dbReference>
<dbReference type="SMR" id="A6VKS6"/>
<dbReference type="STRING" id="339671.Asuc_0193"/>
<dbReference type="KEGG" id="asu:Asuc_0193"/>
<dbReference type="eggNOG" id="COG1381">
    <property type="taxonomic scope" value="Bacteria"/>
</dbReference>
<dbReference type="HOGENOM" id="CLU_066645_1_0_6"/>
<dbReference type="Proteomes" id="UP000001114">
    <property type="component" value="Chromosome"/>
</dbReference>
<dbReference type="GO" id="GO:0043590">
    <property type="term" value="C:bacterial nucleoid"/>
    <property type="evidence" value="ECO:0007669"/>
    <property type="project" value="TreeGrafter"/>
</dbReference>
<dbReference type="GO" id="GO:0006310">
    <property type="term" value="P:DNA recombination"/>
    <property type="evidence" value="ECO:0007669"/>
    <property type="project" value="UniProtKB-UniRule"/>
</dbReference>
<dbReference type="GO" id="GO:0006302">
    <property type="term" value="P:double-strand break repair"/>
    <property type="evidence" value="ECO:0007669"/>
    <property type="project" value="TreeGrafter"/>
</dbReference>
<dbReference type="Gene3D" id="2.40.50.140">
    <property type="entry name" value="Nucleic acid-binding proteins"/>
    <property type="match status" value="1"/>
</dbReference>
<dbReference type="Gene3D" id="1.20.1440.120">
    <property type="entry name" value="Recombination protein O, C-terminal domain"/>
    <property type="match status" value="1"/>
</dbReference>
<dbReference type="HAMAP" id="MF_00201">
    <property type="entry name" value="RecO"/>
    <property type="match status" value="1"/>
</dbReference>
<dbReference type="InterPro" id="IPR037278">
    <property type="entry name" value="ARFGAP/RecO"/>
</dbReference>
<dbReference type="InterPro" id="IPR022572">
    <property type="entry name" value="DNA_rep/recomb_RecO_N"/>
</dbReference>
<dbReference type="InterPro" id="IPR012340">
    <property type="entry name" value="NA-bd_OB-fold"/>
</dbReference>
<dbReference type="InterPro" id="IPR003717">
    <property type="entry name" value="RecO"/>
</dbReference>
<dbReference type="InterPro" id="IPR042242">
    <property type="entry name" value="RecO_C"/>
</dbReference>
<dbReference type="NCBIfam" id="TIGR00613">
    <property type="entry name" value="reco"/>
    <property type="match status" value="1"/>
</dbReference>
<dbReference type="PANTHER" id="PTHR33991">
    <property type="entry name" value="DNA REPAIR PROTEIN RECO"/>
    <property type="match status" value="1"/>
</dbReference>
<dbReference type="PANTHER" id="PTHR33991:SF1">
    <property type="entry name" value="DNA REPAIR PROTEIN RECO"/>
    <property type="match status" value="1"/>
</dbReference>
<dbReference type="Pfam" id="PF02565">
    <property type="entry name" value="RecO_C"/>
    <property type="match status" value="1"/>
</dbReference>
<dbReference type="Pfam" id="PF11967">
    <property type="entry name" value="RecO_N"/>
    <property type="match status" value="1"/>
</dbReference>
<dbReference type="SUPFAM" id="SSF57863">
    <property type="entry name" value="ArfGap/RecO-like zinc finger"/>
    <property type="match status" value="1"/>
</dbReference>
<dbReference type="SUPFAM" id="SSF50249">
    <property type="entry name" value="Nucleic acid-binding proteins"/>
    <property type="match status" value="1"/>
</dbReference>
<comment type="function">
    <text evidence="1">Involved in DNA repair and RecF pathway recombination.</text>
</comment>
<comment type="similarity">
    <text evidence="1">Belongs to the RecO family.</text>
</comment>